<dbReference type="EMBL" id="AE014184">
    <property type="protein sequence ID" value="AAO44810.1"/>
    <property type="molecule type" value="Genomic_DNA"/>
</dbReference>
<dbReference type="RefSeq" id="WP_011096667.1">
    <property type="nucleotide sequence ID" value="NC_004572.3"/>
</dbReference>
<dbReference type="SMR" id="P66099"/>
<dbReference type="STRING" id="203267.TWT_713"/>
<dbReference type="GeneID" id="67388507"/>
<dbReference type="KEGG" id="twh:TWT_713"/>
<dbReference type="eggNOG" id="COG0081">
    <property type="taxonomic scope" value="Bacteria"/>
</dbReference>
<dbReference type="HOGENOM" id="CLU_062853_0_0_11"/>
<dbReference type="OrthoDB" id="9803740at2"/>
<dbReference type="Proteomes" id="UP000002200">
    <property type="component" value="Chromosome"/>
</dbReference>
<dbReference type="GO" id="GO:0015934">
    <property type="term" value="C:large ribosomal subunit"/>
    <property type="evidence" value="ECO:0007669"/>
    <property type="project" value="InterPro"/>
</dbReference>
<dbReference type="GO" id="GO:0019843">
    <property type="term" value="F:rRNA binding"/>
    <property type="evidence" value="ECO:0007669"/>
    <property type="project" value="UniProtKB-UniRule"/>
</dbReference>
<dbReference type="GO" id="GO:0003735">
    <property type="term" value="F:structural constituent of ribosome"/>
    <property type="evidence" value="ECO:0007669"/>
    <property type="project" value="InterPro"/>
</dbReference>
<dbReference type="GO" id="GO:0000049">
    <property type="term" value="F:tRNA binding"/>
    <property type="evidence" value="ECO:0007669"/>
    <property type="project" value="UniProtKB-KW"/>
</dbReference>
<dbReference type="GO" id="GO:0006417">
    <property type="term" value="P:regulation of translation"/>
    <property type="evidence" value="ECO:0007669"/>
    <property type="project" value="UniProtKB-KW"/>
</dbReference>
<dbReference type="GO" id="GO:0006412">
    <property type="term" value="P:translation"/>
    <property type="evidence" value="ECO:0007669"/>
    <property type="project" value="UniProtKB-UniRule"/>
</dbReference>
<dbReference type="CDD" id="cd00403">
    <property type="entry name" value="Ribosomal_L1"/>
    <property type="match status" value="1"/>
</dbReference>
<dbReference type="FunFam" id="3.40.50.790:FF:000001">
    <property type="entry name" value="50S ribosomal protein L1"/>
    <property type="match status" value="1"/>
</dbReference>
<dbReference type="Gene3D" id="3.30.190.20">
    <property type="match status" value="1"/>
</dbReference>
<dbReference type="Gene3D" id="3.40.50.790">
    <property type="match status" value="1"/>
</dbReference>
<dbReference type="HAMAP" id="MF_01318_B">
    <property type="entry name" value="Ribosomal_uL1_B"/>
    <property type="match status" value="1"/>
</dbReference>
<dbReference type="InterPro" id="IPR005878">
    <property type="entry name" value="Ribosom_uL1_bac-type"/>
</dbReference>
<dbReference type="InterPro" id="IPR002143">
    <property type="entry name" value="Ribosomal_uL1"/>
</dbReference>
<dbReference type="InterPro" id="IPR023674">
    <property type="entry name" value="Ribosomal_uL1-like"/>
</dbReference>
<dbReference type="InterPro" id="IPR028364">
    <property type="entry name" value="Ribosomal_uL1/biogenesis"/>
</dbReference>
<dbReference type="InterPro" id="IPR016095">
    <property type="entry name" value="Ribosomal_uL1_3-a/b-sand"/>
</dbReference>
<dbReference type="InterPro" id="IPR023673">
    <property type="entry name" value="Ribosomal_uL1_CS"/>
</dbReference>
<dbReference type="NCBIfam" id="TIGR01169">
    <property type="entry name" value="rplA_bact"/>
    <property type="match status" value="1"/>
</dbReference>
<dbReference type="PANTHER" id="PTHR36427">
    <property type="entry name" value="54S RIBOSOMAL PROTEIN L1, MITOCHONDRIAL"/>
    <property type="match status" value="1"/>
</dbReference>
<dbReference type="PANTHER" id="PTHR36427:SF3">
    <property type="entry name" value="LARGE RIBOSOMAL SUBUNIT PROTEIN UL1M"/>
    <property type="match status" value="1"/>
</dbReference>
<dbReference type="Pfam" id="PF00687">
    <property type="entry name" value="Ribosomal_L1"/>
    <property type="match status" value="1"/>
</dbReference>
<dbReference type="PIRSF" id="PIRSF002155">
    <property type="entry name" value="Ribosomal_L1"/>
    <property type="match status" value="1"/>
</dbReference>
<dbReference type="SUPFAM" id="SSF56808">
    <property type="entry name" value="Ribosomal protein L1"/>
    <property type="match status" value="1"/>
</dbReference>
<dbReference type="PROSITE" id="PS01199">
    <property type="entry name" value="RIBOSOMAL_L1"/>
    <property type="match status" value="1"/>
</dbReference>
<accession>P66099</accession>
<accession>Q83FK9</accession>
<accession>Q83HB0</accession>
<sequence>MTKRSKAYRSAVTSIASDKLYPVEDAIGLVKETAYAKIDSAFEVALKLGIDPRKTDQLVRGVVMLPHGTGKAVRVVVFATGPSAQAALDSGASEVGGSDLVARVADGYVDFDVAISTPELMAQVGQLGRVLGPRGLMPNPKTGTVTADVGKAVKDALGGRIEFKTDKHANIHFVIGKTSFSVESLSENLSVALDEINRARPQKHKGRYIKKMFFSSTFGPSVRVALA</sequence>
<feature type="chain" id="PRO_0000125769" description="Large ribosomal subunit protein uL1">
    <location>
        <begin position="1"/>
        <end position="227"/>
    </location>
</feature>
<reference key="1">
    <citation type="journal article" date="2003" name="Genome Res.">
        <title>Tropheryma whipplei twist: a human pathogenic Actinobacteria with a reduced genome.</title>
        <authorList>
            <person name="Raoult D."/>
            <person name="Ogata H."/>
            <person name="Audic S."/>
            <person name="Robert C."/>
            <person name="Suhre K."/>
            <person name="Drancourt M."/>
            <person name="Claverie J.-M."/>
        </authorList>
    </citation>
    <scope>NUCLEOTIDE SEQUENCE [LARGE SCALE GENOMIC DNA]</scope>
    <source>
        <strain>Twist</strain>
    </source>
</reference>
<name>RL1_TROWT</name>
<gene>
    <name evidence="1" type="primary">rplA</name>
    <name type="ordered locus">TWT_713</name>
</gene>
<evidence type="ECO:0000255" key="1">
    <source>
        <dbReference type="HAMAP-Rule" id="MF_01318"/>
    </source>
</evidence>
<evidence type="ECO:0000305" key="2"/>
<protein>
    <recommendedName>
        <fullName evidence="1">Large ribosomal subunit protein uL1</fullName>
    </recommendedName>
    <alternativeName>
        <fullName evidence="2">50S ribosomal protein L1</fullName>
    </alternativeName>
</protein>
<comment type="function">
    <text evidence="1">Binds directly to 23S rRNA. The L1 stalk is quite mobile in the ribosome, and is involved in E site tRNA release.</text>
</comment>
<comment type="function">
    <text evidence="1">Protein L1 is also a translational repressor protein, it controls the translation of the L11 operon by binding to its mRNA.</text>
</comment>
<comment type="subunit">
    <text evidence="1">Part of the 50S ribosomal subunit.</text>
</comment>
<comment type="similarity">
    <text evidence="1">Belongs to the universal ribosomal protein uL1 family.</text>
</comment>
<organism>
    <name type="scientific">Tropheryma whipplei (strain Twist)</name>
    <name type="common">Whipple's bacillus</name>
    <dbReference type="NCBI Taxonomy" id="203267"/>
    <lineage>
        <taxon>Bacteria</taxon>
        <taxon>Bacillati</taxon>
        <taxon>Actinomycetota</taxon>
        <taxon>Actinomycetes</taxon>
        <taxon>Micrococcales</taxon>
        <taxon>Tropherymataceae</taxon>
        <taxon>Tropheryma</taxon>
    </lineage>
</organism>
<proteinExistence type="inferred from homology"/>
<keyword id="KW-1185">Reference proteome</keyword>
<keyword id="KW-0678">Repressor</keyword>
<keyword id="KW-0687">Ribonucleoprotein</keyword>
<keyword id="KW-0689">Ribosomal protein</keyword>
<keyword id="KW-0694">RNA-binding</keyword>
<keyword id="KW-0699">rRNA-binding</keyword>
<keyword id="KW-0810">Translation regulation</keyword>
<keyword id="KW-0820">tRNA-binding</keyword>